<reference key="1">
    <citation type="journal article" date="2005" name="J. Bacteriol.">
        <title>Whole-genome sequencing of Staphylococcus haemolyticus uncovers the extreme plasticity of its genome and the evolution of human-colonizing staphylococcal species.</title>
        <authorList>
            <person name="Takeuchi F."/>
            <person name="Watanabe S."/>
            <person name="Baba T."/>
            <person name="Yuzawa H."/>
            <person name="Ito T."/>
            <person name="Morimoto Y."/>
            <person name="Kuroda M."/>
            <person name="Cui L."/>
            <person name="Takahashi M."/>
            <person name="Ankai A."/>
            <person name="Baba S."/>
            <person name="Fukui S."/>
            <person name="Lee J.C."/>
            <person name="Hiramatsu K."/>
        </authorList>
    </citation>
    <scope>NUCLEOTIDE SEQUENCE [LARGE SCALE GENOMIC DNA]</scope>
    <source>
        <strain>JCSC1435</strain>
    </source>
</reference>
<name>MEPA_STAHJ</name>
<feature type="chain" id="PRO_0000290236" description="Multidrug export protein MepA">
    <location>
        <begin position="1"/>
        <end position="452"/>
    </location>
</feature>
<feature type="transmembrane region" description="Helical" evidence="2">
    <location>
        <begin position="26"/>
        <end position="46"/>
    </location>
</feature>
<feature type="transmembrane region" description="Helical" evidence="2">
    <location>
        <begin position="54"/>
        <end position="74"/>
    </location>
</feature>
<feature type="transmembrane region" description="Helical" evidence="2">
    <location>
        <begin position="98"/>
        <end position="118"/>
    </location>
</feature>
<feature type="transmembrane region" description="Helical" evidence="2">
    <location>
        <begin position="139"/>
        <end position="159"/>
    </location>
</feature>
<feature type="transmembrane region" description="Helical" evidence="2">
    <location>
        <begin position="170"/>
        <end position="190"/>
    </location>
</feature>
<feature type="transmembrane region" description="Helical" evidence="2">
    <location>
        <begin position="194"/>
        <end position="214"/>
    </location>
</feature>
<feature type="transmembrane region" description="Helical" evidence="2">
    <location>
        <begin position="245"/>
        <end position="265"/>
    </location>
</feature>
<feature type="transmembrane region" description="Helical" evidence="2">
    <location>
        <begin position="282"/>
        <end position="302"/>
    </location>
</feature>
<feature type="transmembrane region" description="Helical" evidence="2">
    <location>
        <begin position="318"/>
        <end position="338"/>
    </location>
</feature>
<feature type="transmembrane region" description="Helical" evidence="2">
    <location>
        <begin position="351"/>
        <end position="371"/>
    </location>
</feature>
<feature type="transmembrane region" description="Helical" evidence="2">
    <location>
        <begin position="390"/>
        <end position="410"/>
    </location>
</feature>
<feature type="transmembrane region" description="Helical" evidence="2">
    <location>
        <begin position="414"/>
        <end position="434"/>
    </location>
</feature>
<dbReference type="EMBL" id="AP006716">
    <property type="protein sequence ID" value="BAE03985.1"/>
    <property type="status" value="ALT_SEQ"/>
    <property type="molecule type" value="Genomic_DNA"/>
</dbReference>
<dbReference type="EMBL" id="AP006716">
    <property type="protein sequence ID" value="BAE03986.1"/>
    <property type="status" value="ALT_SEQ"/>
    <property type="molecule type" value="Genomic_DNA"/>
</dbReference>
<dbReference type="SMR" id="Q4L8N9"/>
<dbReference type="KEGG" id="sha:SH0676"/>
<dbReference type="KEGG" id="sha:SH0677"/>
<dbReference type="eggNOG" id="COG0534">
    <property type="taxonomic scope" value="Bacteria"/>
</dbReference>
<dbReference type="HOGENOM" id="CLU_2588003_0_0_9"/>
<dbReference type="Proteomes" id="UP000000543">
    <property type="component" value="Chromosome"/>
</dbReference>
<dbReference type="GO" id="GO:0005886">
    <property type="term" value="C:plasma membrane"/>
    <property type="evidence" value="ECO:0007669"/>
    <property type="project" value="UniProtKB-SubCell"/>
</dbReference>
<dbReference type="GO" id="GO:0015297">
    <property type="term" value="F:antiporter activity"/>
    <property type="evidence" value="ECO:0007669"/>
    <property type="project" value="InterPro"/>
</dbReference>
<dbReference type="GO" id="GO:0042910">
    <property type="term" value="F:xenobiotic transmembrane transporter activity"/>
    <property type="evidence" value="ECO:0007669"/>
    <property type="project" value="InterPro"/>
</dbReference>
<dbReference type="GO" id="GO:0046677">
    <property type="term" value="P:response to antibiotic"/>
    <property type="evidence" value="ECO:0007669"/>
    <property type="project" value="UniProtKB-KW"/>
</dbReference>
<dbReference type="CDD" id="cd13143">
    <property type="entry name" value="MATE_MepA_like"/>
    <property type="match status" value="1"/>
</dbReference>
<dbReference type="InterPro" id="IPR002528">
    <property type="entry name" value="MATE_fam"/>
</dbReference>
<dbReference type="InterPro" id="IPR045070">
    <property type="entry name" value="MATE_MepA-like"/>
</dbReference>
<dbReference type="InterPro" id="IPR051327">
    <property type="entry name" value="MATE_MepA_subfamily"/>
</dbReference>
<dbReference type="InterPro" id="IPR048279">
    <property type="entry name" value="MdtK-like"/>
</dbReference>
<dbReference type="NCBIfam" id="TIGR00797">
    <property type="entry name" value="matE"/>
    <property type="match status" value="1"/>
</dbReference>
<dbReference type="PANTHER" id="PTHR43823:SF3">
    <property type="entry name" value="MULTIDRUG EXPORT PROTEIN MEPA"/>
    <property type="match status" value="1"/>
</dbReference>
<dbReference type="PANTHER" id="PTHR43823">
    <property type="entry name" value="SPORULATION PROTEIN YKVU"/>
    <property type="match status" value="1"/>
</dbReference>
<dbReference type="Pfam" id="PF01554">
    <property type="entry name" value="MatE"/>
    <property type="match status" value="2"/>
</dbReference>
<dbReference type="PIRSF" id="PIRSF006603">
    <property type="entry name" value="DinF"/>
    <property type="match status" value="1"/>
</dbReference>
<sequence>MKDEQLFYFEESSIFKAMMHFSLPMMIGSLLSVIYGILNIYFIGFLDNSHMISAISLTLPIFAVLMAFGNLFGVGGGTYISRLLGAKDYIKSHYVSSFSIYSSLVLGLIIAVITLPFTDQIASILCASGETLNYTSDYLKIEFLSTPFVILFFVLEQFARAIGKPIISMIGMLSSVGINIILDPILIFGLHLDVVGAALGTAISNAIAGLFFIIYFSRKNETLSFNVKHAKPTKAMMQEIFKIGIPAFLMVVLMGVTGLVVNLFLATYGNYAIASYGISFRLVQFPELIIMGLSEGVVPLIAYNFVSNKTRMKDTIKVVIVSIAVIFAVCMTVVLVAGHSIVQLFSTDPQIVVLATFILKVTMTSLLLNGIGFLFTGMLQATGQGRGATIMAIAQGTVIIPVLFVLNSLFGLTGVIWSLLIAETVCAFLAMFIVYSLRNRLTVDKASLIEVE</sequence>
<organism>
    <name type="scientific">Staphylococcus haemolyticus (strain JCSC1435)</name>
    <dbReference type="NCBI Taxonomy" id="279808"/>
    <lineage>
        <taxon>Bacteria</taxon>
        <taxon>Bacillati</taxon>
        <taxon>Bacillota</taxon>
        <taxon>Bacilli</taxon>
        <taxon>Bacillales</taxon>
        <taxon>Staphylococcaceae</taxon>
        <taxon>Staphylococcus</taxon>
    </lineage>
</organism>
<proteinExistence type="inferred from homology"/>
<protein>
    <recommendedName>
        <fullName>Multidrug export protein MepA</fullName>
    </recommendedName>
</protein>
<accession>Q4L8N9</accession>
<accession>Q4L8P0</accession>
<evidence type="ECO:0000250" key="1"/>
<evidence type="ECO:0000255" key="2"/>
<evidence type="ECO:0000305" key="3"/>
<comment type="function">
    <text evidence="1">Multidrug resistance efflux protein.</text>
</comment>
<comment type="subcellular location">
    <subcellularLocation>
        <location evidence="3">Cell membrane</location>
        <topology evidence="3">Multi-pass membrane protein</topology>
    </subcellularLocation>
</comment>
<comment type="similarity">
    <text evidence="3">Belongs to the multi antimicrobial extrusion (MATE) (TC 2.A.66.1) family. MepA subfamily.</text>
</comment>
<comment type="sequence caution" evidence="3">
    <conflict type="erroneous termination">
        <sequence resource="EMBL-CDS" id="BAE03985"/>
    </conflict>
    <text>Truncated C-terminus.</text>
</comment>
<comment type="sequence caution" evidence="3">
    <conflict type="erroneous termination">
        <sequence resource="EMBL-CDS" id="BAE03986"/>
    </conflict>
    <text>Truncated C-terminus.</text>
</comment>
<gene>
    <name type="primary">mepA</name>
    <name type="ordered locus">SH0676/SH0677</name>
</gene>
<keyword id="KW-0046">Antibiotic resistance</keyword>
<keyword id="KW-1003">Cell membrane</keyword>
<keyword id="KW-0472">Membrane</keyword>
<keyword id="KW-0812">Transmembrane</keyword>
<keyword id="KW-1133">Transmembrane helix</keyword>
<keyword id="KW-0813">Transport</keyword>